<accession>Q51841</accession>
<feature type="chain" id="PRO_0000120645" description="NAD kinase">
    <location>
        <begin position="1"/>
        <end position="288"/>
    </location>
</feature>
<feature type="active site" description="Proton acceptor" evidence="1">
    <location>
        <position position="73"/>
    </location>
</feature>
<feature type="binding site" evidence="1">
    <location>
        <begin position="73"/>
        <end position="74"/>
    </location>
    <ligand>
        <name>NAD(+)</name>
        <dbReference type="ChEBI" id="CHEBI:57540"/>
    </ligand>
</feature>
<feature type="binding site" evidence="1">
    <location>
        <position position="78"/>
    </location>
    <ligand>
        <name>NAD(+)</name>
        <dbReference type="ChEBI" id="CHEBI:57540"/>
    </ligand>
</feature>
<feature type="binding site" evidence="1">
    <location>
        <begin position="144"/>
        <end position="145"/>
    </location>
    <ligand>
        <name>NAD(+)</name>
        <dbReference type="ChEBI" id="CHEBI:57540"/>
    </ligand>
</feature>
<feature type="binding site" evidence="1">
    <location>
        <position position="174"/>
    </location>
    <ligand>
        <name>NAD(+)</name>
        <dbReference type="ChEBI" id="CHEBI:57540"/>
    </ligand>
</feature>
<feature type="binding site" evidence="1">
    <location>
        <begin position="185"/>
        <end position="190"/>
    </location>
    <ligand>
        <name>NAD(+)</name>
        <dbReference type="ChEBI" id="CHEBI:57540"/>
    </ligand>
</feature>
<feature type="binding site" evidence="1">
    <location>
        <position position="209"/>
    </location>
    <ligand>
        <name>NAD(+)</name>
        <dbReference type="ChEBI" id="CHEBI:57540"/>
    </ligand>
</feature>
<feature type="sequence conflict" description="In Ref. 1; CAA65865." evidence="2" ref="1">
    <original>HQIGVSQIPVLG</original>
    <variation>IKSAFRRSLSWA</variation>
    <location>
        <begin position="81"/>
        <end position="92"/>
    </location>
</feature>
<feature type="sequence conflict" description="In Ref. 1; CAA65865." evidence="2" ref="1">
    <original>R</original>
    <variation>G</variation>
    <location>
        <position position="269"/>
    </location>
</feature>
<name>NADK_PORGI</name>
<dbReference type="EC" id="2.7.1.23" evidence="1"/>
<dbReference type="EMBL" id="X97228">
    <property type="protein sequence ID" value="CAA65865.1"/>
    <property type="molecule type" value="Genomic_DNA"/>
</dbReference>
<dbReference type="EMBL" id="AE015924">
    <property type="protein sequence ID" value="AAQ65813.1"/>
    <property type="molecule type" value="Genomic_DNA"/>
</dbReference>
<dbReference type="RefSeq" id="WP_005874508.1">
    <property type="nucleotide sequence ID" value="NC_002950.2"/>
</dbReference>
<dbReference type="SMR" id="Q51841"/>
<dbReference type="STRING" id="242619.PG_0629"/>
<dbReference type="EnsemblBacteria" id="AAQ65813">
    <property type="protein sequence ID" value="AAQ65813"/>
    <property type="gene ID" value="PG_0629"/>
</dbReference>
<dbReference type="KEGG" id="pgi:PG_0629"/>
<dbReference type="PATRIC" id="fig|242619.8.peg.575"/>
<dbReference type="eggNOG" id="COG0061">
    <property type="taxonomic scope" value="Bacteria"/>
</dbReference>
<dbReference type="HOGENOM" id="CLU_008831_0_3_10"/>
<dbReference type="BioCyc" id="PGIN242619:G1G02-584-MONOMER"/>
<dbReference type="Proteomes" id="UP000000588">
    <property type="component" value="Chromosome"/>
</dbReference>
<dbReference type="GO" id="GO:0005737">
    <property type="term" value="C:cytoplasm"/>
    <property type="evidence" value="ECO:0007669"/>
    <property type="project" value="UniProtKB-SubCell"/>
</dbReference>
<dbReference type="GO" id="GO:0005524">
    <property type="term" value="F:ATP binding"/>
    <property type="evidence" value="ECO:0007669"/>
    <property type="project" value="UniProtKB-KW"/>
</dbReference>
<dbReference type="GO" id="GO:0046872">
    <property type="term" value="F:metal ion binding"/>
    <property type="evidence" value="ECO:0007669"/>
    <property type="project" value="UniProtKB-UniRule"/>
</dbReference>
<dbReference type="GO" id="GO:0051287">
    <property type="term" value="F:NAD binding"/>
    <property type="evidence" value="ECO:0007669"/>
    <property type="project" value="UniProtKB-ARBA"/>
</dbReference>
<dbReference type="GO" id="GO:0003951">
    <property type="term" value="F:NAD+ kinase activity"/>
    <property type="evidence" value="ECO:0007669"/>
    <property type="project" value="UniProtKB-UniRule"/>
</dbReference>
<dbReference type="GO" id="GO:0019674">
    <property type="term" value="P:NAD metabolic process"/>
    <property type="evidence" value="ECO:0007669"/>
    <property type="project" value="InterPro"/>
</dbReference>
<dbReference type="GO" id="GO:0006741">
    <property type="term" value="P:NADP biosynthetic process"/>
    <property type="evidence" value="ECO:0007669"/>
    <property type="project" value="UniProtKB-UniRule"/>
</dbReference>
<dbReference type="Gene3D" id="3.40.50.10330">
    <property type="entry name" value="Probable inorganic polyphosphate/atp-NAD kinase, domain 1"/>
    <property type="match status" value="1"/>
</dbReference>
<dbReference type="Gene3D" id="2.60.200.30">
    <property type="entry name" value="Probable inorganic polyphosphate/atp-NAD kinase, domain 2"/>
    <property type="match status" value="1"/>
</dbReference>
<dbReference type="HAMAP" id="MF_00361">
    <property type="entry name" value="NAD_kinase"/>
    <property type="match status" value="1"/>
</dbReference>
<dbReference type="InterPro" id="IPR017438">
    <property type="entry name" value="ATP-NAD_kinase_N"/>
</dbReference>
<dbReference type="InterPro" id="IPR017437">
    <property type="entry name" value="ATP-NAD_kinase_PpnK-typ_C"/>
</dbReference>
<dbReference type="InterPro" id="IPR016064">
    <property type="entry name" value="NAD/diacylglycerol_kinase_sf"/>
</dbReference>
<dbReference type="InterPro" id="IPR002504">
    <property type="entry name" value="NADK"/>
</dbReference>
<dbReference type="NCBIfam" id="NF002521">
    <property type="entry name" value="PRK01911.1"/>
    <property type="match status" value="1"/>
</dbReference>
<dbReference type="PANTHER" id="PTHR20275">
    <property type="entry name" value="NAD KINASE"/>
    <property type="match status" value="1"/>
</dbReference>
<dbReference type="PANTHER" id="PTHR20275:SF0">
    <property type="entry name" value="NAD KINASE"/>
    <property type="match status" value="1"/>
</dbReference>
<dbReference type="Pfam" id="PF01513">
    <property type="entry name" value="NAD_kinase"/>
    <property type="match status" value="1"/>
</dbReference>
<dbReference type="Pfam" id="PF20143">
    <property type="entry name" value="NAD_kinase_C"/>
    <property type="match status" value="1"/>
</dbReference>
<dbReference type="SUPFAM" id="SSF111331">
    <property type="entry name" value="NAD kinase/diacylglycerol kinase-like"/>
    <property type="match status" value="1"/>
</dbReference>
<proteinExistence type="inferred from homology"/>
<organism>
    <name type="scientific">Porphyromonas gingivalis (strain ATCC BAA-308 / W83)</name>
    <dbReference type="NCBI Taxonomy" id="242619"/>
    <lineage>
        <taxon>Bacteria</taxon>
        <taxon>Pseudomonadati</taxon>
        <taxon>Bacteroidota</taxon>
        <taxon>Bacteroidia</taxon>
        <taxon>Bacteroidales</taxon>
        <taxon>Porphyromonadaceae</taxon>
        <taxon>Porphyromonas</taxon>
    </lineage>
</organism>
<evidence type="ECO:0000255" key="1">
    <source>
        <dbReference type="HAMAP-Rule" id="MF_00361"/>
    </source>
</evidence>
<evidence type="ECO:0000305" key="2"/>
<comment type="function">
    <text evidence="1">Involved in the regulation of the intracellular balance of NAD and NADP, and is a key enzyme in the biosynthesis of NADP. Catalyzes specifically the phosphorylation on 2'-hydroxyl of the adenosine moiety of NAD to yield NADP.</text>
</comment>
<comment type="catalytic activity">
    <reaction evidence="1">
        <text>NAD(+) + ATP = ADP + NADP(+) + H(+)</text>
        <dbReference type="Rhea" id="RHEA:18629"/>
        <dbReference type="ChEBI" id="CHEBI:15378"/>
        <dbReference type="ChEBI" id="CHEBI:30616"/>
        <dbReference type="ChEBI" id="CHEBI:57540"/>
        <dbReference type="ChEBI" id="CHEBI:58349"/>
        <dbReference type="ChEBI" id="CHEBI:456216"/>
        <dbReference type="EC" id="2.7.1.23"/>
    </reaction>
</comment>
<comment type="cofactor">
    <cofactor evidence="1">
        <name>a divalent metal cation</name>
        <dbReference type="ChEBI" id="CHEBI:60240"/>
    </cofactor>
</comment>
<comment type="subcellular location">
    <subcellularLocation>
        <location evidence="1">Cytoplasm</location>
    </subcellularLocation>
</comment>
<comment type="similarity">
    <text evidence="1">Belongs to the NAD kinase family.</text>
</comment>
<gene>
    <name evidence="1" type="primary">nadK</name>
    <name type="synonym">put</name>
    <name type="ordered locus">PG_0629</name>
</gene>
<protein>
    <recommendedName>
        <fullName evidence="1">NAD kinase</fullName>
        <ecNumber evidence="1">2.7.1.23</ecNumber>
    </recommendedName>
    <alternativeName>
        <fullName evidence="1">ATP-dependent NAD kinase</fullName>
    </alternativeName>
</protein>
<sequence>MKKIAIFGSRHKSEQGASIKALILKLEEAGTPLYIERKFLSFLKQDLDFHPAICGVIDTLPEHIDYVICMGGDGTFLRTAHQIGVSQIPVLGVNTGRLGFLTDVDCHEASELITRLLDGDFTIETRSLLEVTEDNGSSPSYALNEAAILKRETGSMIRVNACLNDDYLAAYDADGLVVATPSGSTAYSLSGNGPIIMPACRNFVLTPIAPHSLNMRPLVVPDDTVIRLEVDSRSRNYLLVLDGRTRTLPCDTSILLKRAPHTLRMIRLRPHSFAETLRRKLMWGAAVR</sequence>
<keyword id="KW-0067">ATP-binding</keyword>
<keyword id="KW-0963">Cytoplasm</keyword>
<keyword id="KW-0418">Kinase</keyword>
<keyword id="KW-0520">NAD</keyword>
<keyword id="KW-0521">NADP</keyword>
<keyword id="KW-0547">Nucleotide-binding</keyword>
<keyword id="KW-1185">Reference proteome</keyword>
<keyword id="KW-0808">Transferase</keyword>
<reference key="1">
    <citation type="submission" date="1996-04" db="EMBL/GenBank/DDBJ databases">
        <title>Cloning of pyridoxal phosphate from P.gingivalis.</title>
        <authorList>
            <person name="Wallace A.M."/>
            <person name="Roberts I.S."/>
        </authorList>
    </citation>
    <scope>NUCLEOTIDE SEQUENCE [GENOMIC DNA]</scope>
    <source>
        <strain>ATCC BAA-308 / W83</strain>
    </source>
</reference>
<reference key="2">
    <citation type="journal article" date="2003" name="J. Bacteriol.">
        <title>Complete genome sequence of the oral pathogenic bacterium Porphyromonas gingivalis strain W83.</title>
        <authorList>
            <person name="Nelson K.E."/>
            <person name="Fleischmann R.D."/>
            <person name="DeBoy R.T."/>
            <person name="Paulsen I.T."/>
            <person name="Fouts D.E."/>
            <person name="Eisen J.A."/>
            <person name="Daugherty S.C."/>
            <person name="Dodson R.J."/>
            <person name="Durkin A.S."/>
            <person name="Gwinn M.L."/>
            <person name="Haft D.H."/>
            <person name="Kolonay J.F."/>
            <person name="Nelson W.C."/>
            <person name="Mason T.M."/>
            <person name="Tallon L."/>
            <person name="Gray J."/>
            <person name="Granger D."/>
            <person name="Tettelin H."/>
            <person name="Dong H."/>
            <person name="Galvin J.L."/>
            <person name="Duncan M.J."/>
            <person name="Dewhirst F.E."/>
            <person name="Fraser C.M."/>
        </authorList>
    </citation>
    <scope>NUCLEOTIDE SEQUENCE [LARGE SCALE GENOMIC DNA]</scope>
    <source>
        <strain>ATCC BAA-308 / W83</strain>
    </source>
</reference>